<accession>B1J4W2</accession>
<reference key="1">
    <citation type="submission" date="2008-02" db="EMBL/GenBank/DDBJ databases">
        <title>Complete sequence of Pseudomonas putida W619.</title>
        <authorList>
            <person name="Copeland A."/>
            <person name="Lucas S."/>
            <person name="Lapidus A."/>
            <person name="Barry K."/>
            <person name="Detter J.C."/>
            <person name="Glavina del Rio T."/>
            <person name="Dalin E."/>
            <person name="Tice H."/>
            <person name="Pitluck S."/>
            <person name="Chain P."/>
            <person name="Malfatti S."/>
            <person name="Shin M."/>
            <person name="Vergez L."/>
            <person name="Schmutz J."/>
            <person name="Larimer F."/>
            <person name="Land M."/>
            <person name="Hauser L."/>
            <person name="Kyrpides N."/>
            <person name="Kim E."/>
            <person name="Taghavi S."/>
            <person name="Vangronsveld D."/>
            <person name="van der Lelie D."/>
            <person name="Richardson P."/>
        </authorList>
    </citation>
    <scope>NUCLEOTIDE SEQUENCE [LARGE SCALE GENOMIC DNA]</scope>
    <source>
        <strain>W619</strain>
    </source>
</reference>
<name>TPMT_PSEPW</name>
<proteinExistence type="inferred from homology"/>
<comment type="catalytic activity">
    <reaction evidence="1">
        <text>S-adenosyl-L-methionine + a thiopurine = S-adenosyl-L-homocysteine + a thiopurine S-methylether.</text>
        <dbReference type="EC" id="2.1.1.67"/>
    </reaction>
</comment>
<comment type="subcellular location">
    <subcellularLocation>
        <location evidence="1">Cytoplasm</location>
    </subcellularLocation>
</comment>
<comment type="similarity">
    <text evidence="1">Belongs to the class I-like SAM-binding methyltransferase superfamily. TPMT family.</text>
</comment>
<sequence>MEAAFWHQKWADNQIGFHQAQANPYLQRYWPGLGLAAGSRVLVPLCGKSLDMAWLAGQGYRVRGIELSRRAVEDFFQEQGLQAQVWQQGAFEVWCSGEVELWCGDFFALRAEDVADCVGLYDRAALIALPPQMRERYMGLLSQILPVGSGLLVTLDYEQKLLAGPPFSVADEEVRRGFAGWQVEEVEARDVIGESPKFLQAGVKRLVERVYRVQF</sequence>
<feature type="chain" id="PRO_1000134078" description="Thiopurine S-methyltransferase">
    <location>
        <begin position="1"/>
        <end position="215"/>
    </location>
</feature>
<feature type="binding site" evidence="1">
    <location>
        <position position="10"/>
    </location>
    <ligand>
        <name>S-adenosyl-L-methionine</name>
        <dbReference type="ChEBI" id="CHEBI:59789"/>
    </ligand>
</feature>
<feature type="binding site" evidence="1">
    <location>
        <position position="45"/>
    </location>
    <ligand>
        <name>S-adenosyl-L-methionine</name>
        <dbReference type="ChEBI" id="CHEBI:59789"/>
    </ligand>
</feature>
<feature type="binding site" evidence="1">
    <location>
        <position position="66"/>
    </location>
    <ligand>
        <name>S-adenosyl-L-methionine</name>
        <dbReference type="ChEBI" id="CHEBI:59789"/>
    </ligand>
</feature>
<feature type="binding site" evidence="1">
    <location>
        <position position="123"/>
    </location>
    <ligand>
        <name>S-adenosyl-L-methionine</name>
        <dbReference type="ChEBI" id="CHEBI:59789"/>
    </ligand>
</feature>
<organism>
    <name type="scientific">Pseudomonas putida (strain W619)</name>
    <dbReference type="NCBI Taxonomy" id="390235"/>
    <lineage>
        <taxon>Bacteria</taxon>
        <taxon>Pseudomonadati</taxon>
        <taxon>Pseudomonadota</taxon>
        <taxon>Gammaproteobacteria</taxon>
        <taxon>Pseudomonadales</taxon>
        <taxon>Pseudomonadaceae</taxon>
        <taxon>Pseudomonas</taxon>
    </lineage>
</organism>
<protein>
    <recommendedName>
        <fullName evidence="1">Thiopurine S-methyltransferase</fullName>
        <ecNumber evidence="1">2.1.1.67</ecNumber>
    </recommendedName>
    <alternativeName>
        <fullName evidence="1">Thiopurine methyltransferase</fullName>
    </alternativeName>
</protein>
<keyword id="KW-0963">Cytoplasm</keyword>
<keyword id="KW-0489">Methyltransferase</keyword>
<keyword id="KW-0949">S-adenosyl-L-methionine</keyword>
<keyword id="KW-0808">Transferase</keyword>
<dbReference type="EC" id="2.1.1.67" evidence="1"/>
<dbReference type="EMBL" id="CP000949">
    <property type="protein sequence ID" value="ACA71984.1"/>
    <property type="molecule type" value="Genomic_DNA"/>
</dbReference>
<dbReference type="SMR" id="B1J4W2"/>
<dbReference type="STRING" id="390235.PputW619_1479"/>
<dbReference type="KEGG" id="ppw:PputW619_1479"/>
<dbReference type="eggNOG" id="COG0500">
    <property type="taxonomic scope" value="Bacteria"/>
</dbReference>
<dbReference type="HOGENOM" id="CLU_085515_1_0_6"/>
<dbReference type="OrthoDB" id="9778208at2"/>
<dbReference type="GO" id="GO:0005737">
    <property type="term" value="C:cytoplasm"/>
    <property type="evidence" value="ECO:0007669"/>
    <property type="project" value="UniProtKB-SubCell"/>
</dbReference>
<dbReference type="GO" id="GO:0008119">
    <property type="term" value="F:thiopurine S-methyltransferase activity"/>
    <property type="evidence" value="ECO:0007669"/>
    <property type="project" value="UniProtKB-UniRule"/>
</dbReference>
<dbReference type="GO" id="GO:0032259">
    <property type="term" value="P:methylation"/>
    <property type="evidence" value="ECO:0007669"/>
    <property type="project" value="UniProtKB-KW"/>
</dbReference>
<dbReference type="GO" id="GO:0010038">
    <property type="term" value="P:response to metal ion"/>
    <property type="evidence" value="ECO:0007669"/>
    <property type="project" value="InterPro"/>
</dbReference>
<dbReference type="FunFam" id="3.40.50.150:FF:000101">
    <property type="entry name" value="Thiopurine S-methyltransferase"/>
    <property type="match status" value="1"/>
</dbReference>
<dbReference type="Gene3D" id="3.40.50.150">
    <property type="entry name" value="Vaccinia Virus protein VP39"/>
    <property type="match status" value="1"/>
</dbReference>
<dbReference type="HAMAP" id="MF_00812">
    <property type="entry name" value="Thiopur_methtran"/>
    <property type="match status" value="1"/>
</dbReference>
<dbReference type="InterPro" id="IPR029063">
    <property type="entry name" value="SAM-dependent_MTases_sf"/>
</dbReference>
<dbReference type="InterPro" id="IPR022474">
    <property type="entry name" value="Thiopur_S-MeTfrase_Se/Te_detox"/>
</dbReference>
<dbReference type="InterPro" id="IPR025835">
    <property type="entry name" value="Thiopurine_S-MeTrfase"/>
</dbReference>
<dbReference type="InterPro" id="IPR008854">
    <property type="entry name" value="TPMT"/>
</dbReference>
<dbReference type="NCBIfam" id="NF009732">
    <property type="entry name" value="PRK13255.1"/>
    <property type="match status" value="1"/>
</dbReference>
<dbReference type="NCBIfam" id="TIGR03840">
    <property type="entry name" value="TMPT_Se_Te"/>
    <property type="match status" value="1"/>
</dbReference>
<dbReference type="PANTHER" id="PTHR10259">
    <property type="entry name" value="THIOPURINE S-METHYLTRANSFERASE"/>
    <property type="match status" value="1"/>
</dbReference>
<dbReference type="PANTHER" id="PTHR10259:SF11">
    <property type="entry name" value="THIOPURINE S-METHYLTRANSFERASE"/>
    <property type="match status" value="1"/>
</dbReference>
<dbReference type="Pfam" id="PF05724">
    <property type="entry name" value="TPMT"/>
    <property type="match status" value="1"/>
</dbReference>
<dbReference type="PIRSF" id="PIRSF023956">
    <property type="entry name" value="Thiopurine_S-methyltransferase"/>
    <property type="match status" value="1"/>
</dbReference>
<dbReference type="SUPFAM" id="SSF53335">
    <property type="entry name" value="S-adenosyl-L-methionine-dependent methyltransferases"/>
    <property type="match status" value="1"/>
</dbReference>
<dbReference type="PROSITE" id="PS51585">
    <property type="entry name" value="SAM_MT_TPMT"/>
    <property type="match status" value="1"/>
</dbReference>
<evidence type="ECO:0000255" key="1">
    <source>
        <dbReference type="HAMAP-Rule" id="MF_00812"/>
    </source>
</evidence>
<gene>
    <name evidence="1" type="primary">tpm</name>
    <name type="ordered locus">PputW619_1479</name>
</gene>